<reference key="1">
    <citation type="submission" date="1997-06" db="EMBL/GenBank/DDBJ databases">
        <title>Pancreatic elastase from rhesus monkey.</title>
        <authorList>
            <person name="Sziegoleit A."/>
        </authorList>
    </citation>
    <scope>NUCLEOTIDE SEQUENCE [MRNA]</scope>
    <source>
        <tissue>Pancreas</tissue>
    </source>
</reference>
<gene>
    <name type="primary">CELA3B</name>
    <name type="synonym">ELA3B</name>
</gene>
<name>CEL3B_MACMU</name>
<keyword id="KW-1015">Disulfide bond</keyword>
<keyword id="KW-0325">Glycoprotein</keyword>
<keyword id="KW-0378">Hydrolase</keyword>
<keyword id="KW-0645">Protease</keyword>
<keyword id="KW-1185">Reference proteome</keyword>
<keyword id="KW-0720">Serine protease</keyword>
<keyword id="KW-0732">Signal</keyword>
<keyword id="KW-0865">Zymogen</keyword>
<sequence>VASGYGPPSSHPSSRVVNGEDAVPYSWPWQVSLQYEKNGSFHHTCGGSLIAPDWVVTAGHCISSSLTYQVALGDYNLAVKEGPEQVIPINSGDLFVHPLWNRLCVACGNDIALIKLSRSAQLGDAVQLASLPPAGDILPNETPCYITGWGRLYTNGPLPDKLQRALLPVVDYEHCSKWNWWGSTVKKTMVCAGGDIRSGCNGDSGGPLNCPTDDGGWQVHGVTSFVSSFGCNTQRKPTVFTRVSAFIDWIEETIASH</sequence>
<organism>
    <name type="scientific">Macaca mulatta</name>
    <name type="common">Rhesus macaque</name>
    <dbReference type="NCBI Taxonomy" id="9544"/>
    <lineage>
        <taxon>Eukaryota</taxon>
        <taxon>Metazoa</taxon>
        <taxon>Chordata</taxon>
        <taxon>Craniata</taxon>
        <taxon>Vertebrata</taxon>
        <taxon>Euteleostomi</taxon>
        <taxon>Mammalia</taxon>
        <taxon>Eutheria</taxon>
        <taxon>Euarchontoglires</taxon>
        <taxon>Primates</taxon>
        <taxon>Haplorrhini</taxon>
        <taxon>Catarrhini</taxon>
        <taxon>Cercopithecidae</taxon>
        <taxon>Cercopithecinae</taxon>
        <taxon>Macaca</taxon>
    </lineage>
</organism>
<comment type="function">
    <text evidence="1">Efficient protease with alanine specificity but only little elastolytic activity.</text>
</comment>
<comment type="catalytic activity">
    <reaction>
        <text>Preferential cleavage: Ala-|-Xaa. Does not hydrolyze elastin.</text>
        <dbReference type="EC" id="3.4.21.70"/>
    </reaction>
</comment>
<comment type="similarity">
    <text evidence="3">Belongs to the peptidase S1 family. Elastase subfamily.</text>
</comment>
<evidence type="ECO:0000250" key="1"/>
<evidence type="ECO:0000255" key="2"/>
<evidence type="ECO:0000255" key="3">
    <source>
        <dbReference type="PROSITE-ProRule" id="PRU00274"/>
    </source>
</evidence>
<protein>
    <recommendedName>
        <fullName>Chymotrypsin-like elastase family member 3B</fullName>
        <ecNumber>3.4.21.70</ecNumber>
    </recommendedName>
    <alternativeName>
        <fullName>Elastase IIIB</fullName>
    </alternativeName>
    <alternativeName>
        <fullName>Elastase-3B</fullName>
    </alternativeName>
    <alternativeName>
        <fullName>Protease E</fullName>
    </alternativeName>
</protein>
<accession>O19023</accession>
<dbReference type="EC" id="3.4.21.70"/>
<dbReference type="EMBL" id="AJ000067">
    <property type="protein sequence ID" value="CAA03899.1"/>
    <property type="molecule type" value="mRNA"/>
</dbReference>
<dbReference type="SMR" id="O19023"/>
<dbReference type="FunCoup" id="O19023">
    <property type="interactions" value="200"/>
</dbReference>
<dbReference type="STRING" id="9544.ENSMMUP00000005184"/>
<dbReference type="MEROPS" id="S01.154"/>
<dbReference type="GlyCosmos" id="O19023">
    <property type="glycosylation" value="1 site, No reported glycans"/>
</dbReference>
<dbReference type="PaxDb" id="9544-ENSMMUP00000005184"/>
<dbReference type="eggNOG" id="KOG3627">
    <property type="taxonomic scope" value="Eukaryota"/>
</dbReference>
<dbReference type="InParanoid" id="O19023"/>
<dbReference type="Proteomes" id="UP000006718">
    <property type="component" value="Unassembled WGS sequence"/>
</dbReference>
<dbReference type="GO" id="GO:0005615">
    <property type="term" value="C:extracellular space"/>
    <property type="evidence" value="ECO:0000318"/>
    <property type="project" value="GO_Central"/>
</dbReference>
<dbReference type="GO" id="GO:0004252">
    <property type="term" value="F:serine-type endopeptidase activity"/>
    <property type="evidence" value="ECO:0000318"/>
    <property type="project" value="GO_Central"/>
</dbReference>
<dbReference type="GO" id="GO:0006508">
    <property type="term" value="P:proteolysis"/>
    <property type="evidence" value="ECO:0000318"/>
    <property type="project" value="GO_Central"/>
</dbReference>
<dbReference type="CDD" id="cd00190">
    <property type="entry name" value="Tryp_SPc"/>
    <property type="match status" value="1"/>
</dbReference>
<dbReference type="FunFam" id="2.40.10.10:FF:000280">
    <property type="match status" value="1"/>
</dbReference>
<dbReference type="FunFam" id="2.40.10.10:FF:000004">
    <property type="entry name" value="Tryptase gamma 1"/>
    <property type="match status" value="1"/>
</dbReference>
<dbReference type="Gene3D" id="2.40.10.10">
    <property type="entry name" value="Trypsin-like serine proteases"/>
    <property type="match status" value="2"/>
</dbReference>
<dbReference type="InterPro" id="IPR050850">
    <property type="entry name" value="Peptidase_S1_Elastase_sf"/>
</dbReference>
<dbReference type="InterPro" id="IPR009003">
    <property type="entry name" value="Peptidase_S1_PA"/>
</dbReference>
<dbReference type="InterPro" id="IPR043504">
    <property type="entry name" value="Peptidase_S1_PA_chymotrypsin"/>
</dbReference>
<dbReference type="InterPro" id="IPR001314">
    <property type="entry name" value="Peptidase_S1A"/>
</dbReference>
<dbReference type="InterPro" id="IPR001254">
    <property type="entry name" value="Trypsin_dom"/>
</dbReference>
<dbReference type="InterPro" id="IPR018114">
    <property type="entry name" value="TRYPSIN_HIS"/>
</dbReference>
<dbReference type="InterPro" id="IPR033116">
    <property type="entry name" value="TRYPSIN_SER"/>
</dbReference>
<dbReference type="PANTHER" id="PTHR24257">
    <property type="entry name" value="CHYMOTRYPSIN-LIKE ELASTASE FAMILY MEMBER"/>
    <property type="match status" value="1"/>
</dbReference>
<dbReference type="PANTHER" id="PTHR24257:SF22">
    <property type="entry name" value="CHYMOTRYPSIN-LIKE ELASTASE FAMILY MEMBER 3B"/>
    <property type="match status" value="1"/>
</dbReference>
<dbReference type="Pfam" id="PF00089">
    <property type="entry name" value="Trypsin"/>
    <property type="match status" value="1"/>
</dbReference>
<dbReference type="PRINTS" id="PR00722">
    <property type="entry name" value="CHYMOTRYPSIN"/>
</dbReference>
<dbReference type="SMART" id="SM00020">
    <property type="entry name" value="Tryp_SPc"/>
    <property type="match status" value="1"/>
</dbReference>
<dbReference type="SUPFAM" id="SSF50494">
    <property type="entry name" value="Trypsin-like serine proteases"/>
    <property type="match status" value="1"/>
</dbReference>
<dbReference type="PROSITE" id="PS50240">
    <property type="entry name" value="TRYPSIN_DOM"/>
    <property type="match status" value="1"/>
</dbReference>
<dbReference type="PROSITE" id="PS00134">
    <property type="entry name" value="TRYPSIN_HIS"/>
    <property type="match status" value="1"/>
</dbReference>
<dbReference type="PROSITE" id="PS00135">
    <property type="entry name" value="TRYPSIN_SER"/>
    <property type="match status" value="1"/>
</dbReference>
<proteinExistence type="evidence at transcript level"/>
<feature type="signal peptide" description="Or 3" evidence="2">
    <location>
        <begin position="1" status="less than"/>
        <end position="2"/>
    </location>
</feature>
<feature type="propeptide" id="PRO_0000027701" description="Activation peptide" evidence="2">
    <location>
        <begin position="3"/>
        <end position="15"/>
    </location>
</feature>
<feature type="chain" id="PRO_0000027702" description="Chymotrypsin-like elastase family member 3B">
    <location>
        <begin position="16"/>
        <end position="257" status="greater than"/>
    </location>
</feature>
<feature type="domain" description="Peptidase S1" evidence="3">
    <location>
        <begin position="16"/>
        <end position="255"/>
    </location>
</feature>
<feature type="active site" description="Charge relay system" evidence="1">
    <location>
        <position position="60"/>
    </location>
</feature>
<feature type="active site" description="Charge relay system" evidence="1">
    <location>
        <position position="110"/>
    </location>
</feature>
<feature type="active site" description="Charge relay system" evidence="1">
    <location>
        <position position="204"/>
    </location>
</feature>
<feature type="glycosylation site" description="N-linked (GlcNAc...) asparagine" evidence="2">
    <location>
        <position position="38"/>
    </location>
</feature>
<feature type="disulfide bond" evidence="3">
    <location>
        <begin position="45"/>
        <end position="61"/>
    </location>
</feature>
<feature type="disulfide bond" evidence="3">
    <location>
        <begin position="104"/>
        <end position="107"/>
    </location>
</feature>
<feature type="disulfide bond" evidence="3">
    <location>
        <begin position="144"/>
        <end position="210"/>
    </location>
</feature>
<feature type="disulfide bond" evidence="3">
    <location>
        <begin position="175"/>
        <end position="191"/>
    </location>
</feature>
<feature type="disulfide bond" evidence="3">
    <location>
        <begin position="200"/>
        <end position="231"/>
    </location>
</feature>
<feature type="non-terminal residue">
    <location>
        <position position="1"/>
    </location>
</feature>
<feature type="non-terminal residue">
    <location>
        <position position="257"/>
    </location>
</feature>